<name>OXD_RHOER</name>
<dbReference type="EC" id="4.8.1.2" evidence="1 2"/>
<dbReference type="EMBL" id="AB094201">
    <property type="protein sequence ID" value="BAD17969.1"/>
    <property type="molecule type" value="Genomic_DNA"/>
</dbReference>
<dbReference type="PDB" id="3A15">
    <property type="method" value="X-ray"/>
    <property type="resolution" value="1.79 A"/>
    <property type="chains" value="A/B/C/D=1-353"/>
</dbReference>
<dbReference type="PDB" id="3A16">
    <property type="method" value="X-ray"/>
    <property type="resolution" value="1.60 A"/>
    <property type="chains" value="A/B/C/D=1-353"/>
</dbReference>
<dbReference type="PDB" id="3A17">
    <property type="method" value="X-ray"/>
    <property type="resolution" value="2.50 A"/>
    <property type="chains" value="A/B/C/D/E/F/G/H=1-353"/>
</dbReference>
<dbReference type="PDB" id="3A18">
    <property type="method" value="X-ray"/>
    <property type="resolution" value="1.80 A"/>
    <property type="chains" value="A/B/C/D=1-353"/>
</dbReference>
<dbReference type="PDBsum" id="3A15"/>
<dbReference type="PDBsum" id="3A16"/>
<dbReference type="PDBsum" id="3A17"/>
<dbReference type="PDBsum" id="3A18"/>
<dbReference type="SMR" id="Q76K71"/>
<dbReference type="EvolutionaryTrace" id="Q76K71"/>
<dbReference type="GO" id="GO:0016829">
    <property type="term" value="F:lyase activity"/>
    <property type="evidence" value="ECO:0007669"/>
    <property type="project" value="UniProtKB-KW"/>
</dbReference>
<dbReference type="GO" id="GO:0046872">
    <property type="term" value="F:metal ion binding"/>
    <property type="evidence" value="ECO:0007669"/>
    <property type="project" value="UniProtKB-KW"/>
</dbReference>
<dbReference type="InterPro" id="IPR025702">
    <property type="entry name" value="OXD"/>
</dbReference>
<dbReference type="Pfam" id="PF13816">
    <property type="entry name" value="Dehydratase_hem"/>
    <property type="match status" value="1"/>
</dbReference>
<sequence>MESAIGEHLQCPRTLTRRVPDTYTPPFPMWVGRADDALQQVVMGYLGVQFRDEDQRPAALQAMRDIVAGFDLPDGPAHHDLTHHIDNQGYENLIVVGYWKDVSSQHRWSTSTPIASWWESEDRLSDGLGFFREIVAPRAEQFETLYAFQEDLPGVGAVMDGISGEINEHGYWGSMRERFPISQTDWMQASGELRVIAGDPAVGGRVVVRGHDNIALIRSGQDWADAEADERSLYLDEILPTLQSGMDFLRDNGPAVGCYSNRFVRNIDIDGNFLDLSYNIGHWASLDQLERWSESHPTHLRIFTTFFRVAAGLSKLRLYHEVSVFDAADQLYEYINCHPGTGMLRDAVTIAEH</sequence>
<proteinExistence type="evidence at protein level"/>
<feature type="chain" id="PRO_0000456624" description="Aliphatic aldoxime dehydratase">
    <location>
        <begin position="1"/>
        <end position="353"/>
    </location>
</feature>
<feature type="active site" evidence="5">
    <location>
        <position position="320"/>
    </location>
</feature>
<feature type="binding site" evidence="5 7 8 9">
    <location>
        <position position="219"/>
    </location>
    <ligand>
        <name>an aliphatic aldoxime</name>
        <dbReference type="ChEBI" id="CHEBI:82744"/>
    </ligand>
</feature>
<feature type="binding site" description="axial binding residue" evidence="2 6 7 8 9">
    <location>
        <position position="299"/>
    </location>
    <ligand>
        <name>heme b</name>
        <dbReference type="ChEBI" id="CHEBI:60344"/>
    </ligand>
    <ligandPart>
        <name>Fe</name>
        <dbReference type="ChEBI" id="CHEBI:18248"/>
    </ligandPart>
</feature>
<feature type="binding site" evidence="5 7 8 9">
    <location>
        <position position="320"/>
    </location>
    <ligand>
        <name>an aliphatic aldoxime</name>
        <dbReference type="ChEBI" id="CHEBI:82744"/>
    </ligand>
</feature>
<feature type="mutagenesis site" description="Retains 14% of wild-type activity with Z-phenylacetaldoxime as substrate." evidence="2">
    <original>E</original>
    <variation>Q</variation>
    <location>
        <position position="143"/>
    </location>
</feature>
<feature type="mutagenesis site" description="Retains 36% of wild-type activity with Z-phenylacetaldoxime as substrate." evidence="2">
    <original>R</original>
    <variation>Q</variation>
    <location>
        <position position="178"/>
    </location>
</feature>
<feature type="mutagenesis site" description="Retains 23% of wild-type activity with Z-phenylacetaldoxime as substrate." evidence="2">
    <original>S</original>
    <variation>A</variation>
    <location>
        <position position="219"/>
    </location>
</feature>
<feature type="mutagenesis site" description="Retains 33% of wild-type activity with Z-phenylacetaldoxime as substrate." evidence="2">
    <original>F</original>
    <variation>A</variation>
    <location>
        <position position="306"/>
    </location>
</feature>
<feature type="mutagenesis site" description="Retains 11% of wild-type activity with Z-phenylacetaldoxime as substrate." evidence="2">
    <original>H</original>
    <variation>A</variation>
    <location>
        <position position="320"/>
    </location>
</feature>
<feature type="helix" evidence="10">
    <location>
        <begin position="7"/>
        <end position="9"/>
    </location>
</feature>
<feature type="strand" evidence="10">
    <location>
        <begin position="42"/>
        <end position="50"/>
    </location>
</feature>
<feature type="helix" evidence="10">
    <location>
        <begin position="53"/>
        <end position="55"/>
    </location>
</feature>
<feature type="helix" evidence="10">
    <location>
        <begin position="56"/>
        <end position="69"/>
    </location>
</feature>
<feature type="strand" evidence="10">
    <location>
        <begin position="77"/>
        <end position="85"/>
    </location>
</feature>
<feature type="strand" evidence="10">
    <location>
        <begin position="91"/>
        <end position="100"/>
    </location>
</feature>
<feature type="helix" evidence="10">
    <location>
        <begin position="102"/>
        <end position="110"/>
    </location>
</feature>
<feature type="helix" evidence="10">
    <location>
        <begin position="112"/>
        <end position="119"/>
    </location>
</feature>
<feature type="helix" evidence="10">
    <location>
        <begin position="122"/>
        <end position="125"/>
    </location>
</feature>
<feature type="strand" evidence="10">
    <location>
        <begin position="128"/>
        <end position="135"/>
    </location>
</feature>
<feature type="helix" evidence="10">
    <location>
        <begin position="139"/>
        <end position="141"/>
    </location>
</feature>
<feature type="strand" evidence="10">
    <location>
        <begin position="142"/>
        <end position="151"/>
    </location>
</feature>
<feature type="helix" evidence="10">
    <location>
        <begin position="154"/>
        <end position="158"/>
    </location>
</feature>
<feature type="strand" evidence="10">
    <location>
        <begin position="159"/>
        <end position="162"/>
    </location>
</feature>
<feature type="strand" evidence="10">
    <location>
        <begin position="164"/>
        <end position="168"/>
    </location>
</feature>
<feature type="helix" evidence="10">
    <location>
        <begin position="174"/>
        <end position="178"/>
    </location>
</feature>
<feature type="helix" evidence="10">
    <location>
        <begin position="180"/>
        <end position="183"/>
    </location>
</feature>
<feature type="strand" evidence="10">
    <location>
        <begin position="194"/>
        <end position="199"/>
    </location>
</feature>
<feature type="turn" evidence="10">
    <location>
        <begin position="200"/>
        <end position="202"/>
    </location>
</feature>
<feature type="strand" evidence="10">
    <location>
        <begin position="203"/>
        <end position="209"/>
    </location>
</feature>
<feature type="strand" evidence="10">
    <location>
        <begin position="214"/>
        <end position="222"/>
    </location>
</feature>
<feature type="helix" evidence="10">
    <location>
        <begin position="228"/>
        <end position="236"/>
    </location>
</feature>
<feature type="helix" evidence="10">
    <location>
        <begin position="238"/>
        <end position="251"/>
    </location>
</feature>
<feature type="helix" evidence="10">
    <location>
        <begin position="253"/>
        <end position="256"/>
    </location>
</feature>
<feature type="strand" evidence="10">
    <location>
        <begin position="258"/>
        <end position="267"/>
    </location>
</feature>
<feature type="strand" evidence="10">
    <location>
        <begin position="273"/>
        <end position="284"/>
    </location>
</feature>
<feature type="helix" evidence="10">
    <location>
        <begin position="286"/>
        <end position="295"/>
    </location>
</feature>
<feature type="helix" evidence="10">
    <location>
        <begin position="297"/>
        <end position="309"/>
    </location>
</feature>
<feature type="helix" evidence="10">
    <location>
        <begin position="310"/>
        <end position="312"/>
    </location>
</feature>
<feature type="strand" evidence="10">
    <location>
        <begin position="317"/>
        <end position="325"/>
    </location>
</feature>
<feature type="helix" evidence="10">
    <location>
        <begin position="327"/>
        <end position="329"/>
    </location>
</feature>
<feature type="strand" evidence="10">
    <location>
        <begin position="330"/>
        <end position="336"/>
    </location>
</feature>
<feature type="helix" evidence="10">
    <location>
        <begin position="342"/>
        <end position="344"/>
    </location>
</feature>
<feature type="turn" evidence="10">
    <location>
        <begin position="350"/>
        <end position="352"/>
    </location>
</feature>
<comment type="function">
    <text evidence="1 2">Catalyzes the dehydration of aldoximes to their corresponding nitrile (PubMed:16233624, PubMed:19740758). Is active toward various arylalkyl- and alkyl-aldoximes, and to a lesser extent toward aryl-aldoximes (PubMed:16233624).</text>
</comment>
<comment type="catalytic activity">
    <reaction evidence="1 2">
        <text>an aliphatic aldoxime = a nitrile + H2O</text>
        <dbReference type="Rhea" id="RHEA:11316"/>
        <dbReference type="ChEBI" id="CHEBI:15377"/>
        <dbReference type="ChEBI" id="CHEBI:18379"/>
        <dbReference type="ChEBI" id="CHEBI:82744"/>
        <dbReference type="EC" id="4.8.1.2"/>
    </reaction>
</comment>
<comment type="cofactor">
    <cofactor evidence="1 2">
        <name>heme b</name>
        <dbReference type="ChEBI" id="CHEBI:60344"/>
    </cofactor>
    <text evidence="2">The substrate is directly bound to the heme iron.</text>
</comment>
<comment type="activity regulation">
    <text evidence="1 2">Active when the heme iron is in the ferrous state (PubMed:16233624, PubMed:19740758). The activity is enhanced by reducing agents, such as Na(2)S, Na(2)S(2)(O4), 2-mercaptoethanol, and L-cysteine and supplementary additions of electron acceptors such as flavins, sulfite ion, and vitamin K3 (PubMed:16233624). The effect of various chemicals on the enzyme activity is different in the presence and absence of the reducing reagent, Na(2)S, which acts not only as a reductant but also changes the substrate specificity of the enzyme (PubMed:16233624).</text>
</comment>
<comment type="biophysicochemical properties">
    <kinetics>
        <KM evidence="1">5.37 mM for Z-phenylacetaldoxime (with Na(2)S)</KM>
        <KM evidence="1">3.22 mM for Z-phenylacetaldoxime (without Na(2)S)</KM>
        <KM evidence="1">10 mM for E/Z-2-phenylpropionaldoxime (with Na(2)S)</KM>
        <KM evidence="1">2.56 mM for E/Z-2-phenylpropionaldoxime (without Na(2)S)</KM>
        <KM evidence="1">5.88 mM for Z-3-phenylpropionaldoxime (with Na(2)S)</KM>
        <KM evidence="1">4.08 mM for Z-3-phenylpropionaldoxime (without Na(2)S)</KM>
        <KM evidence="1">0.99 mM for E/Z-cyclohexanecarboxaldehyde oxime (with Na(2)S)</KM>
        <KM evidence="1">1.25 mM for E/Z-cyclohexanecarboxaldehyde oxime (without Na(2)S)</KM>
        <KM evidence="1">2.17 mM for E/Z-propionaldoxime (with Na(2)S)</KM>
        <KM evidence="1">1.85 mM for E/Z-propionaldoxime (without Na(2)S)</KM>
        <KM evidence="1">2.64 mM for E/Z-n-butyraldoxime (with Na(2)S)</KM>
        <KM evidence="1">4.34 mM for E/Z-n-butyraldoxime (without Na(2)S)</KM>
        <KM evidence="1">1.41 mM for E/Z-isobutyraldoxime (with Na(2)S)</KM>
        <KM evidence="1">0.76 mM for E/Z-isobutyraldoxime (without Na(2)S)</KM>
        <KM evidence="1">1.13 mM for E/Z-n-valeraldoxime (with Na(2)S)</KM>
        <KM evidence="1">1.41 mM for E/Z-n-valeraldoxime (without Na(2)S)</KM>
        <KM evidence="1">2.43 mM for E/Z-isovaleraldoxime (with Na(2)S)</KM>
        <KM evidence="1">6.66 mM for E/Z-isovaleraldoxime (without Na(2)S)</KM>
        <Vmax evidence="1">5.41 umol/min/mg enzyme with Z-phenylacetaldoxime as substrate (with Na(2)S)</Vmax>
        <Vmax evidence="1">1.56 umol/min/mg enzyme with Z-phenylacetaldoxime as substrate (without Na(2)S)</Vmax>
        <Vmax evidence="1">7.93 umol/min/mg enzyme with E/Z-2-phenylpropionaldoxime as substrate (with Na(2)S)</Vmax>
        <Vmax evidence="1">4.03 umol/min/mg enzyme with E/Z-2-phenylpropionaldoxime as substrate (without Na(2)S)</Vmax>
        <Vmax evidence="1">4.59 umol/min/mg enzyme with Z-3-phenylpropionaldoxime as substrate (with Na(2)S)</Vmax>
        <Vmax evidence="1">2.17 umol/min/mg enzyme with Z-3-phenylpropionaldoxime as substrate (without Na(2)S)</Vmax>
        <Vmax evidence="1">4.76 umol/min/mg enzyme with E/Z-cyclohexanecarboxaldehyde oxime as substrate (with Na(2)S)</Vmax>
        <Vmax evidence="1">7.41 umol/min/mg enzyme with E/Z-cyclohexanecarboxaldehyde oxime as substrate (without Na(2)S)</Vmax>
        <Vmax evidence="1">5.78 umol/min/mg enzyme with E/Z-propionaldoxime as substrate (with Na(2)S)</Vmax>
        <Vmax evidence="1">4.31 umol/min/mg enzyme with E/Z-propionaldoxime as substrate (without Na(2)S)</Vmax>
        <Vmax evidence="1">6.02 umol/min/mg enzyme with E/Z-n-butyraldoxime as substrate (with Na(2)S)</Vmax>
        <Vmax evidence="1">3.71 umol/min/mg enzyme with E/Z-n-butyraldoxime as substrate (without Na(2)S)</Vmax>
        <Vmax evidence="1">8.33 umol/min/mg enzyme with E/Z-isobutyraldoxime as substrate (with Na(2)S)</Vmax>
        <Vmax evidence="1">5.55 umol/min/mg enzyme with E/Z-isobutyraldoxime as substrate (without Na(2)S)</Vmax>
        <Vmax evidence="1">4.59 umol/min/mg enzyme with E/Z-n-valeraldoxime as substrate (with Na(2)S)</Vmax>
        <Vmax evidence="1">2.59 umol/min/mg enzyme with E/Z-n-valeraldoxime as substrate (without Na(2)S)</Vmax>
        <Vmax evidence="1">5.71 umol/min/mg enzyme with E/Z-isovaleraldoxime as substrate (with Na(2)S)</Vmax>
        <Vmax evidence="1">4.27 umol/min/mg enzyme with E/Z-isovaleraldoxime as substrate (without Na(2)S)</Vmax>
    </kinetics>
    <phDependence>
        <text evidence="1">Optimum pH is 8.0.</text>
    </phDependence>
    <temperatureDependence>
        <text evidence="1">Optimum temperature is 30 degrees Celsius.</text>
    </temperatureDependence>
</comment>
<comment type="subunit">
    <text evidence="1 2">Homodimer.</text>
</comment>
<comment type="similarity">
    <text evidence="4">Belongs to the heme-containing dehydratase family.</text>
</comment>
<keyword id="KW-0002">3D-structure</keyword>
<keyword id="KW-0349">Heme</keyword>
<keyword id="KW-0408">Iron</keyword>
<keyword id="KW-0456">Lyase</keyword>
<keyword id="KW-0479">Metal-binding</keyword>
<organism>
    <name type="scientific">Rhodococcus erythropolis</name>
    <name type="common">Arthrobacter picolinophilus</name>
    <dbReference type="NCBI Taxonomy" id="1833"/>
    <lineage>
        <taxon>Bacteria</taxon>
        <taxon>Bacillati</taxon>
        <taxon>Actinomycetota</taxon>
        <taxon>Actinomycetes</taxon>
        <taxon>Mycobacteriales</taxon>
        <taxon>Nocardiaceae</taxon>
        <taxon>Rhodococcus</taxon>
        <taxon>Rhodococcus erythropolis group</taxon>
    </lineage>
</organism>
<gene>
    <name evidence="3" type="primary">oxd</name>
</gene>
<reference key="1">
    <citation type="journal article" date="2004" name="J. Biosci. Bioeng.">
        <title>Aldoxime dehydratase co-existing with nitrile hydratase and amidase in the iron-type nitrile hydratase-producer Rhodococcus sp. N-771.</title>
        <authorList>
            <person name="Kato Y."/>
            <person name="Yoshida S."/>
            <person name="Xie S.X."/>
            <person name="Asano Y."/>
        </authorList>
    </citation>
    <scope>NUCLEOTIDE SEQUENCE [GENOMIC DNA]</scope>
    <scope>FUNCTION</scope>
    <scope>CATALYTIC ACTIVITY</scope>
    <scope>COFACTOR</scope>
    <scope>ACTIVITY REGULATION</scope>
    <scope>BIOPHYSICOCHEMICAL PROPERTIES</scope>
    <scope>SUBUNIT</scope>
    <source>
        <strain>N-771</strain>
    </source>
</reference>
<reference evidence="6 7 8 9" key="2">
    <citation type="journal article" date="2009" name="J. Biol. Chem.">
        <title>X-ray crystal structure of michaelis complex of aldoxime dehydratase.</title>
        <authorList>
            <person name="Sawai H."/>
            <person name="Sugimoto H."/>
            <person name="Kato Y."/>
            <person name="Asano Y."/>
            <person name="Shiro Y."/>
            <person name="Aono S."/>
        </authorList>
    </citation>
    <scope>X-RAY CRYSTALLOGRAPHY (1.60 ANGSTROMS) IN COMPLEXES WITH HEME; N-BUTYRALDOXIME AND PROPIONALDOXIME</scope>
    <scope>FUNCTION</scope>
    <scope>CATALYTIC ACTIVITY</scope>
    <scope>PROPOSED REACTION MECHANISM</scope>
    <scope>COFACTOR</scope>
    <scope>ACTIVITY REGULATION</scope>
    <scope>SUBUNIT</scope>
    <scope>ACTIVE SITE</scope>
    <scope>MUTAGENESIS OF GLU-143; ARG-178; SER-219; PHE-306 AND HIS-320</scope>
    <source>
        <strain>N-771</strain>
    </source>
</reference>
<evidence type="ECO:0000269" key="1">
    <source>
    </source>
</evidence>
<evidence type="ECO:0000269" key="2">
    <source>
    </source>
</evidence>
<evidence type="ECO:0000303" key="3">
    <source>
    </source>
</evidence>
<evidence type="ECO:0000305" key="4"/>
<evidence type="ECO:0000305" key="5">
    <source>
    </source>
</evidence>
<evidence type="ECO:0007744" key="6">
    <source>
        <dbReference type="PDB" id="3A15"/>
    </source>
</evidence>
<evidence type="ECO:0007744" key="7">
    <source>
        <dbReference type="PDB" id="3A16"/>
    </source>
</evidence>
<evidence type="ECO:0007744" key="8">
    <source>
        <dbReference type="PDB" id="3A17"/>
    </source>
</evidence>
<evidence type="ECO:0007744" key="9">
    <source>
        <dbReference type="PDB" id="3A18"/>
    </source>
</evidence>
<evidence type="ECO:0007829" key="10">
    <source>
        <dbReference type="PDB" id="3A16"/>
    </source>
</evidence>
<accession>Q76K71</accession>
<protein>
    <recommendedName>
        <fullName evidence="4">Aliphatic aldoxime dehydratase</fullName>
        <ecNumber evidence="1 2">4.8.1.2</ecNumber>
    </recommendedName>
    <alternativeName>
        <fullName evidence="3">Aldoxime dehydratase</fullName>
    </alternativeName>
    <alternativeName>
        <fullName evidence="3">OxdRE</fullName>
    </alternativeName>
</protein>